<evidence type="ECO:0000255" key="1">
    <source>
        <dbReference type="HAMAP-Rule" id="MF_00651"/>
    </source>
</evidence>
<dbReference type="EC" id="3.1.-.-" evidence="1"/>
<dbReference type="EMBL" id="CP000141">
    <property type="protein sequence ID" value="ABB15214.1"/>
    <property type="molecule type" value="Genomic_DNA"/>
</dbReference>
<dbReference type="RefSeq" id="WP_011343476.1">
    <property type="nucleotide sequence ID" value="NC_007503.1"/>
</dbReference>
<dbReference type="SMR" id="Q3AEN4"/>
<dbReference type="FunCoup" id="Q3AEN4">
    <property type="interactions" value="288"/>
</dbReference>
<dbReference type="STRING" id="246194.CHY_0542"/>
<dbReference type="KEGG" id="chy:CHY_0542"/>
<dbReference type="eggNOG" id="COG0816">
    <property type="taxonomic scope" value="Bacteria"/>
</dbReference>
<dbReference type="HOGENOM" id="CLU_098240_2_0_9"/>
<dbReference type="InParanoid" id="Q3AEN4"/>
<dbReference type="OrthoDB" id="9796140at2"/>
<dbReference type="Proteomes" id="UP000002706">
    <property type="component" value="Chromosome"/>
</dbReference>
<dbReference type="GO" id="GO:0005829">
    <property type="term" value="C:cytosol"/>
    <property type="evidence" value="ECO:0007669"/>
    <property type="project" value="TreeGrafter"/>
</dbReference>
<dbReference type="GO" id="GO:0004518">
    <property type="term" value="F:nuclease activity"/>
    <property type="evidence" value="ECO:0007669"/>
    <property type="project" value="UniProtKB-KW"/>
</dbReference>
<dbReference type="GO" id="GO:0000967">
    <property type="term" value="P:rRNA 5'-end processing"/>
    <property type="evidence" value="ECO:0007669"/>
    <property type="project" value="UniProtKB-UniRule"/>
</dbReference>
<dbReference type="CDD" id="cd16964">
    <property type="entry name" value="YqgF"/>
    <property type="match status" value="1"/>
</dbReference>
<dbReference type="Gene3D" id="3.30.420.140">
    <property type="entry name" value="YqgF/RNase H-like domain"/>
    <property type="match status" value="1"/>
</dbReference>
<dbReference type="HAMAP" id="MF_00651">
    <property type="entry name" value="Nuclease_YqgF"/>
    <property type="match status" value="1"/>
</dbReference>
<dbReference type="InterPro" id="IPR012337">
    <property type="entry name" value="RNaseH-like_sf"/>
</dbReference>
<dbReference type="InterPro" id="IPR005227">
    <property type="entry name" value="YqgF"/>
</dbReference>
<dbReference type="InterPro" id="IPR006641">
    <property type="entry name" value="YqgF/RNaseH-like_dom"/>
</dbReference>
<dbReference type="InterPro" id="IPR037027">
    <property type="entry name" value="YqgF/RNaseH-like_dom_sf"/>
</dbReference>
<dbReference type="NCBIfam" id="TIGR00250">
    <property type="entry name" value="RNAse_H_YqgF"/>
    <property type="match status" value="1"/>
</dbReference>
<dbReference type="PANTHER" id="PTHR33317">
    <property type="entry name" value="POLYNUCLEOTIDYL TRANSFERASE, RIBONUCLEASE H-LIKE SUPERFAMILY PROTEIN"/>
    <property type="match status" value="1"/>
</dbReference>
<dbReference type="PANTHER" id="PTHR33317:SF4">
    <property type="entry name" value="POLYNUCLEOTIDYL TRANSFERASE, RIBONUCLEASE H-LIKE SUPERFAMILY PROTEIN"/>
    <property type="match status" value="1"/>
</dbReference>
<dbReference type="Pfam" id="PF03652">
    <property type="entry name" value="RuvX"/>
    <property type="match status" value="1"/>
</dbReference>
<dbReference type="SMART" id="SM00732">
    <property type="entry name" value="YqgFc"/>
    <property type="match status" value="1"/>
</dbReference>
<dbReference type="SUPFAM" id="SSF53098">
    <property type="entry name" value="Ribonuclease H-like"/>
    <property type="match status" value="1"/>
</dbReference>
<accession>Q3AEN4</accession>
<name>YQGF_CARHZ</name>
<comment type="function">
    <text evidence="1">Could be a nuclease involved in processing of the 5'-end of pre-16S rRNA.</text>
</comment>
<comment type="subcellular location">
    <subcellularLocation>
        <location evidence="1">Cytoplasm</location>
    </subcellularLocation>
</comment>
<comment type="similarity">
    <text evidence="1">Belongs to the YqgF nuclease family.</text>
</comment>
<reference key="1">
    <citation type="journal article" date="2005" name="PLoS Genet.">
        <title>Life in hot carbon monoxide: the complete genome sequence of Carboxydothermus hydrogenoformans Z-2901.</title>
        <authorList>
            <person name="Wu M."/>
            <person name="Ren Q."/>
            <person name="Durkin A.S."/>
            <person name="Daugherty S.C."/>
            <person name="Brinkac L.M."/>
            <person name="Dodson R.J."/>
            <person name="Madupu R."/>
            <person name="Sullivan S.A."/>
            <person name="Kolonay J.F."/>
            <person name="Nelson W.C."/>
            <person name="Tallon L.J."/>
            <person name="Jones K.M."/>
            <person name="Ulrich L.E."/>
            <person name="Gonzalez J.M."/>
            <person name="Zhulin I.B."/>
            <person name="Robb F.T."/>
            <person name="Eisen J.A."/>
        </authorList>
    </citation>
    <scope>NUCLEOTIDE SEQUENCE [LARGE SCALE GENOMIC DNA]</scope>
    <source>
        <strain>ATCC BAA-161 / DSM 6008 / Z-2901</strain>
    </source>
</reference>
<proteinExistence type="inferred from homology"/>
<gene>
    <name type="ordered locus">CHY_0542</name>
</gene>
<organism>
    <name type="scientific">Carboxydothermus hydrogenoformans (strain ATCC BAA-161 / DSM 6008 / Z-2901)</name>
    <dbReference type="NCBI Taxonomy" id="246194"/>
    <lineage>
        <taxon>Bacteria</taxon>
        <taxon>Bacillati</taxon>
        <taxon>Bacillota</taxon>
        <taxon>Clostridia</taxon>
        <taxon>Thermoanaerobacterales</taxon>
        <taxon>Thermoanaerobacteraceae</taxon>
        <taxon>Carboxydothermus</taxon>
    </lineage>
</organism>
<keyword id="KW-0963">Cytoplasm</keyword>
<keyword id="KW-0378">Hydrolase</keyword>
<keyword id="KW-0540">Nuclease</keyword>
<keyword id="KW-1185">Reference proteome</keyword>
<keyword id="KW-0690">Ribosome biogenesis</keyword>
<protein>
    <recommendedName>
        <fullName evidence="1">Putative pre-16S rRNA nuclease</fullName>
        <ecNumber evidence="1">3.1.-.-</ecNumber>
    </recommendedName>
</protein>
<feature type="chain" id="PRO_0000257514" description="Putative pre-16S rRNA nuclease">
    <location>
        <begin position="1"/>
        <end position="138"/>
    </location>
</feature>
<sequence length="138" mass="15528">MKVLGLDVGDKKIGVALSDELGLTAQGLTVIYRTSLKKDLEEIKKIIDLHHVTEVVIGYPRNMNGTAGPRAELVKRFARELYKFTGIKPVFWDERLSTVEAEKLLISGDISRRKRKKVIDKLAATLILSGYLNYKSKN</sequence>